<evidence type="ECO:0000250" key="1"/>
<evidence type="ECO:0000305" key="2"/>
<protein>
    <recommendedName>
        <fullName>3-isopropylmalate dehydrogenase</fullName>
        <shortName>3-IPM-DH</shortName>
        <shortName>IMDH</shortName>
        <ecNumber>1.1.1.85</ecNumber>
    </recommendedName>
    <alternativeName>
        <fullName>Beta-IPM dehydrogenase</fullName>
    </alternativeName>
</protein>
<keyword id="KW-0028">Amino-acid biosynthesis</keyword>
<keyword id="KW-0100">Branched-chain amino acid biosynthesis</keyword>
<keyword id="KW-0963">Cytoplasm</keyword>
<keyword id="KW-0432">Leucine biosynthesis</keyword>
<keyword id="KW-0460">Magnesium</keyword>
<keyword id="KW-0464">Manganese</keyword>
<keyword id="KW-0479">Metal-binding</keyword>
<keyword id="KW-0520">NAD</keyword>
<keyword id="KW-0560">Oxidoreductase</keyword>
<organism>
    <name type="scientific">Sordaria macrospora</name>
    <dbReference type="NCBI Taxonomy" id="5147"/>
    <lineage>
        <taxon>Eukaryota</taxon>
        <taxon>Fungi</taxon>
        <taxon>Dikarya</taxon>
        <taxon>Ascomycota</taxon>
        <taxon>Pezizomycotina</taxon>
        <taxon>Sordariomycetes</taxon>
        <taxon>Sordariomycetidae</taxon>
        <taxon>Sordariales</taxon>
        <taxon>Sordariaceae</taxon>
        <taxon>Sordaria</taxon>
    </lineage>
</organism>
<comment type="function">
    <text>Catalyzes the oxidation of 3-carboxy-2-hydroxy-4-methylpentanoate (3-isopropylmalate) to 3-carboxy-4-methyl-2-oxopentanoate. The product decarboxylates to 4-methyl-2 oxopentanoate.</text>
</comment>
<comment type="catalytic activity">
    <reaction>
        <text>(2R,3S)-3-isopropylmalate + NAD(+) = 4-methyl-2-oxopentanoate + CO2 + NADH</text>
        <dbReference type="Rhea" id="RHEA:32271"/>
        <dbReference type="ChEBI" id="CHEBI:16526"/>
        <dbReference type="ChEBI" id="CHEBI:17865"/>
        <dbReference type="ChEBI" id="CHEBI:35121"/>
        <dbReference type="ChEBI" id="CHEBI:57540"/>
        <dbReference type="ChEBI" id="CHEBI:57945"/>
        <dbReference type="EC" id="1.1.1.85"/>
    </reaction>
</comment>
<comment type="cofactor">
    <cofactor evidence="1">
        <name>Mg(2+)</name>
        <dbReference type="ChEBI" id="CHEBI:18420"/>
    </cofactor>
    <cofactor evidence="1">
        <name>Mn(2+)</name>
        <dbReference type="ChEBI" id="CHEBI:29035"/>
    </cofactor>
    <text evidence="1">Binds 1 Mg(2+) or Mn(2+) ion per subunit.</text>
</comment>
<comment type="pathway">
    <text>Amino-acid biosynthesis; L-leucine biosynthesis; L-leucine from 3-methyl-2-oxobutanoate: step 3/4.</text>
</comment>
<comment type="subunit">
    <text evidence="1">Homodimer.</text>
</comment>
<comment type="subcellular location">
    <subcellularLocation>
        <location>Cytoplasm</location>
    </subcellularLocation>
</comment>
<comment type="similarity">
    <text evidence="2">Belongs to the isocitrate and isopropylmalate dehydrogenases family.</text>
</comment>
<accession>Q6TWC4</accession>
<proteinExistence type="inferred from homology"/>
<dbReference type="EC" id="1.1.1.85"/>
<dbReference type="EMBL" id="AY386218">
    <property type="protein sequence ID" value="AAQ90189.1"/>
    <property type="molecule type" value="Genomic_DNA"/>
</dbReference>
<dbReference type="RefSeq" id="XP_003345798.1">
    <property type="nucleotide sequence ID" value="XM_003345750.1"/>
</dbReference>
<dbReference type="SMR" id="Q6TWC4"/>
<dbReference type="KEGG" id="smp:10803167"/>
<dbReference type="VEuPathDB" id="FungiDB:SMAC_07082"/>
<dbReference type="OMA" id="LWRETVQ"/>
<dbReference type="UniPathway" id="UPA00048">
    <property type="reaction ID" value="UER00072"/>
</dbReference>
<dbReference type="GO" id="GO:0005829">
    <property type="term" value="C:cytosol"/>
    <property type="evidence" value="ECO:0007669"/>
    <property type="project" value="EnsemblFungi"/>
</dbReference>
<dbReference type="GO" id="GO:0003862">
    <property type="term" value="F:3-isopropylmalate dehydrogenase activity"/>
    <property type="evidence" value="ECO:0007669"/>
    <property type="project" value="UniProtKB-EC"/>
</dbReference>
<dbReference type="GO" id="GO:0000287">
    <property type="term" value="F:magnesium ion binding"/>
    <property type="evidence" value="ECO:0007669"/>
    <property type="project" value="InterPro"/>
</dbReference>
<dbReference type="GO" id="GO:0051287">
    <property type="term" value="F:NAD binding"/>
    <property type="evidence" value="ECO:0007669"/>
    <property type="project" value="InterPro"/>
</dbReference>
<dbReference type="GO" id="GO:0006097">
    <property type="term" value="P:glyoxylate cycle"/>
    <property type="evidence" value="ECO:0007669"/>
    <property type="project" value="EnsemblFungi"/>
</dbReference>
<dbReference type="GO" id="GO:0009098">
    <property type="term" value="P:L-leucine biosynthetic process"/>
    <property type="evidence" value="ECO:0007669"/>
    <property type="project" value="UniProtKB-UniPathway"/>
</dbReference>
<dbReference type="FunFam" id="3.40.718.10:FF:000006">
    <property type="entry name" value="3-isopropylmalate dehydrogenase"/>
    <property type="match status" value="1"/>
</dbReference>
<dbReference type="Gene3D" id="3.40.718.10">
    <property type="entry name" value="Isopropylmalate Dehydrogenase"/>
    <property type="match status" value="1"/>
</dbReference>
<dbReference type="InterPro" id="IPR019818">
    <property type="entry name" value="IsoCit/isopropylmalate_DH_CS"/>
</dbReference>
<dbReference type="InterPro" id="IPR024084">
    <property type="entry name" value="IsoPropMal-DH-like_dom"/>
</dbReference>
<dbReference type="InterPro" id="IPR004429">
    <property type="entry name" value="Isopropylmalate_DH"/>
</dbReference>
<dbReference type="NCBIfam" id="TIGR00169">
    <property type="entry name" value="leuB"/>
    <property type="match status" value="1"/>
</dbReference>
<dbReference type="PANTHER" id="PTHR42979">
    <property type="entry name" value="3-ISOPROPYLMALATE DEHYDROGENASE"/>
    <property type="match status" value="1"/>
</dbReference>
<dbReference type="PANTHER" id="PTHR42979:SF1">
    <property type="entry name" value="3-ISOPROPYLMALATE DEHYDROGENASE"/>
    <property type="match status" value="1"/>
</dbReference>
<dbReference type="Pfam" id="PF00180">
    <property type="entry name" value="Iso_dh"/>
    <property type="match status" value="1"/>
</dbReference>
<dbReference type="SMART" id="SM01329">
    <property type="entry name" value="Iso_dh"/>
    <property type="match status" value="1"/>
</dbReference>
<dbReference type="SUPFAM" id="SSF53659">
    <property type="entry name" value="Isocitrate/Isopropylmalate dehydrogenase-like"/>
    <property type="match status" value="1"/>
</dbReference>
<dbReference type="PROSITE" id="PS00470">
    <property type="entry name" value="IDH_IMDH"/>
    <property type="match status" value="1"/>
</dbReference>
<sequence length="368" mass="38689">MATHNIVVFGGDHCGPEVVVEAIKVLKSIETNSPSAGKFNLQNHLLGGASIDKHHDPLTDEALNAAKAADAVLLGAIGGPEWGTSSTVRPEQGLLKLRKELGTYGNLRPCNFASESLVDSSPLKAEVCRGTDFIVVRELTGGIYFGDRTEDDGSGYACDTEPYSRAEIERIARLAGFLALAKNPPAKVWSLDKANVLATSRLWRKTVTDVISKEFPQLQLEHQLIDSAAMLLVKNPRALNGVVITSNLFGDIISDEASVIPGSIGLLPSASLGGIPDGKGKCNGIYEPIHGSAPDISGKGIVNPVGTILSVAMMLRYSLNLPKEADAVEAAVKAAIDNGTKTKDLGGSATTSDMGNAVVAELEKILKA</sequence>
<name>LEU3_SORMA</name>
<feature type="chain" id="PRO_0000083619" description="3-isopropylmalate dehydrogenase">
    <location>
        <begin position="1"/>
        <end position="368"/>
    </location>
</feature>
<feature type="binding site" evidence="1">
    <location>
        <begin position="79"/>
        <end position="91"/>
    </location>
    <ligand>
        <name>NAD(+)</name>
        <dbReference type="ChEBI" id="CHEBI:57540"/>
    </ligand>
</feature>
<feature type="binding site" evidence="1">
    <location>
        <position position="98"/>
    </location>
    <ligand>
        <name>substrate</name>
    </ligand>
</feature>
<feature type="binding site" evidence="1">
    <location>
        <position position="108"/>
    </location>
    <ligand>
        <name>substrate</name>
    </ligand>
</feature>
<feature type="binding site" evidence="1">
    <location>
        <position position="137"/>
    </location>
    <ligand>
        <name>substrate</name>
    </ligand>
</feature>
<feature type="binding site" evidence="1">
    <location>
        <position position="226"/>
    </location>
    <ligand>
        <name>Mg(2+)</name>
        <dbReference type="ChEBI" id="CHEBI:18420"/>
    </ligand>
</feature>
<feature type="binding site" evidence="1">
    <location>
        <position position="226"/>
    </location>
    <ligand>
        <name>substrate</name>
    </ligand>
</feature>
<feature type="binding site" evidence="1">
    <location>
        <position position="251"/>
    </location>
    <ligand>
        <name>Mg(2+)</name>
        <dbReference type="ChEBI" id="CHEBI:18420"/>
    </ligand>
</feature>
<feature type="binding site" evidence="1">
    <location>
        <position position="255"/>
    </location>
    <ligand>
        <name>Mg(2+)</name>
        <dbReference type="ChEBI" id="CHEBI:18420"/>
    </ligand>
</feature>
<feature type="binding site" evidence="1">
    <location>
        <begin position="291"/>
        <end position="303"/>
    </location>
    <ligand>
        <name>NAD(+)</name>
        <dbReference type="ChEBI" id="CHEBI:57540"/>
    </ligand>
</feature>
<feature type="site" description="Important for catalysis" evidence="1">
    <location>
        <position position="144"/>
    </location>
</feature>
<feature type="site" description="Important for catalysis" evidence="1">
    <location>
        <position position="193"/>
    </location>
</feature>
<gene>
    <name type="primary">LEU1</name>
</gene>
<reference key="1">
    <citation type="submission" date="2003-09" db="EMBL/GenBank/DDBJ databases">
        <title>Genetic analysis of the S. macrospora developmental mutant pro4: a dual function of the leu1 gene in amino acid biosynthesis and fruiting body formation.</title>
        <authorList>
            <person name="Kueck U."/>
        </authorList>
    </citation>
    <scope>NUCLEOTIDE SEQUENCE [GENOMIC DNA]</scope>
</reference>